<gene>
    <name type="primary">SRB6</name>
    <name type="synonym">MED22</name>
    <name type="ordered locus">KLLA0D15719g</name>
</gene>
<reference key="1">
    <citation type="journal article" date="2004" name="Nature">
        <title>Genome evolution in yeasts.</title>
        <authorList>
            <person name="Dujon B."/>
            <person name="Sherman D."/>
            <person name="Fischer G."/>
            <person name="Durrens P."/>
            <person name="Casaregola S."/>
            <person name="Lafontaine I."/>
            <person name="de Montigny J."/>
            <person name="Marck C."/>
            <person name="Neuveglise C."/>
            <person name="Talla E."/>
            <person name="Goffard N."/>
            <person name="Frangeul L."/>
            <person name="Aigle M."/>
            <person name="Anthouard V."/>
            <person name="Babour A."/>
            <person name="Barbe V."/>
            <person name="Barnay S."/>
            <person name="Blanchin S."/>
            <person name="Beckerich J.-M."/>
            <person name="Beyne E."/>
            <person name="Bleykasten C."/>
            <person name="Boisrame A."/>
            <person name="Boyer J."/>
            <person name="Cattolico L."/>
            <person name="Confanioleri F."/>
            <person name="de Daruvar A."/>
            <person name="Despons L."/>
            <person name="Fabre E."/>
            <person name="Fairhead C."/>
            <person name="Ferry-Dumazet H."/>
            <person name="Groppi A."/>
            <person name="Hantraye F."/>
            <person name="Hennequin C."/>
            <person name="Jauniaux N."/>
            <person name="Joyet P."/>
            <person name="Kachouri R."/>
            <person name="Kerrest A."/>
            <person name="Koszul R."/>
            <person name="Lemaire M."/>
            <person name="Lesur I."/>
            <person name="Ma L."/>
            <person name="Muller H."/>
            <person name="Nicaud J.-M."/>
            <person name="Nikolski M."/>
            <person name="Oztas S."/>
            <person name="Ozier-Kalogeropoulos O."/>
            <person name="Pellenz S."/>
            <person name="Potier S."/>
            <person name="Richard G.-F."/>
            <person name="Straub M.-L."/>
            <person name="Suleau A."/>
            <person name="Swennen D."/>
            <person name="Tekaia F."/>
            <person name="Wesolowski-Louvel M."/>
            <person name="Westhof E."/>
            <person name="Wirth B."/>
            <person name="Zeniou-Meyer M."/>
            <person name="Zivanovic Y."/>
            <person name="Bolotin-Fukuhara M."/>
            <person name="Thierry A."/>
            <person name="Bouchier C."/>
            <person name="Caudron B."/>
            <person name="Scarpelli C."/>
            <person name="Gaillardin C."/>
            <person name="Weissenbach J."/>
            <person name="Wincker P."/>
            <person name="Souciet J.-L."/>
        </authorList>
    </citation>
    <scope>NUCLEOTIDE SEQUENCE [LARGE SCALE GENOMIC DNA]</scope>
    <source>
        <strain>ATCC 8585 / CBS 2359 / DSM 70799 / NBRC 1267 / NRRL Y-1140 / WM37</strain>
    </source>
</reference>
<name>MED22_KLULA</name>
<organism>
    <name type="scientific">Kluyveromyces lactis (strain ATCC 8585 / CBS 2359 / DSM 70799 / NBRC 1267 / NRRL Y-1140 / WM37)</name>
    <name type="common">Yeast</name>
    <name type="synonym">Candida sphaerica</name>
    <dbReference type="NCBI Taxonomy" id="284590"/>
    <lineage>
        <taxon>Eukaryota</taxon>
        <taxon>Fungi</taxon>
        <taxon>Dikarya</taxon>
        <taxon>Ascomycota</taxon>
        <taxon>Saccharomycotina</taxon>
        <taxon>Saccharomycetes</taxon>
        <taxon>Saccharomycetales</taxon>
        <taxon>Saccharomycetaceae</taxon>
        <taxon>Kluyveromyces</taxon>
    </lineage>
</organism>
<evidence type="ECO:0000250" key="1"/>
<evidence type="ECO:0000305" key="2"/>
<dbReference type="EMBL" id="CR382124">
    <property type="protein sequence ID" value="CAH00849.1"/>
    <property type="molecule type" value="Genomic_DNA"/>
</dbReference>
<dbReference type="RefSeq" id="XP_453753.1">
    <property type="nucleotide sequence ID" value="XM_453753.1"/>
</dbReference>
<dbReference type="SMR" id="Q6CQN6"/>
<dbReference type="FunCoup" id="Q6CQN6">
    <property type="interactions" value="164"/>
</dbReference>
<dbReference type="STRING" id="284590.Q6CQN6"/>
<dbReference type="PaxDb" id="284590-Q6CQN6"/>
<dbReference type="KEGG" id="kla:KLLA0_D15719g"/>
<dbReference type="eggNOG" id="ENOG502S77A">
    <property type="taxonomic scope" value="Eukaryota"/>
</dbReference>
<dbReference type="HOGENOM" id="CLU_130571_0_0_1"/>
<dbReference type="InParanoid" id="Q6CQN6"/>
<dbReference type="Proteomes" id="UP000000598">
    <property type="component" value="Chromosome D"/>
</dbReference>
<dbReference type="GO" id="GO:0016592">
    <property type="term" value="C:mediator complex"/>
    <property type="evidence" value="ECO:0007669"/>
    <property type="project" value="InterPro"/>
</dbReference>
<dbReference type="GO" id="GO:0003712">
    <property type="term" value="F:transcription coregulator activity"/>
    <property type="evidence" value="ECO:0007669"/>
    <property type="project" value="InterPro"/>
</dbReference>
<dbReference type="GO" id="GO:0006357">
    <property type="term" value="P:regulation of transcription by RNA polymerase II"/>
    <property type="evidence" value="ECO:0007669"/>
    <property type="project" value="InterPro"/>
</dbReference>
<dbReference type="Gene3D" id="6.10.280.160">
    <property type="entry name" value="Mediator of RNA polymerase II transcription subunit 22"/>
    <property type="match status" value="1"/>
</dbReference>
<dbReference type="InterPro" id="IPR009332">
    <property type="entry name" value="Med22"/>
</dbReference>
<dbReference type="InterPro" id="IPR016530">
    <property type="entry name" value="Med22_Saccharomyce"/>
</dbReference>
<dbReference type="Pfam" id="PF06179">
    <property type="entry name" value="Med22"/>
    <property type="match status" value="1"/>
</dbReference>
<dbReference type="PIRSF" id="PIRSF007936">
    <property type="entry name" value="SRB6"/>
    <property type="match status" value="1"/>
</dbReference>
<feature type="chain" id="PRO_0000308578" description="Mediator of RNA polymerase II transcription subunit 22">
    <location>
        <begin position="1"/>
        <end position="121"/>
    </location>
</feature>
<keyword id="KW-0010">Activator</keyword>
<keyword id="KW-0539">Nucleus</keyword>
<keyword id="KW-1185">Reference proteome</keyword>
<keyword id="KW-0804">Transcription</keyword>
<keyword id="KW-0805">Transcription regulation</keyword>
<accession>Q6CQN6</accession>
<sequence length="121" mass="13650">MSNQVLLDKLDRTTETLSNTLIHLAKLSDIEFGGKDTEQPRSSSGLATVSSSGVQMSNNYTMQLIKGIQDLLVITRSIREKWVLSQLPENEELSMFESEETLENCRKLVQESMETLLNDMP</sequence>
<protein>
    <recommendedName>
        <fullName>Mediator of RNA polymerase II transcription subunit 22</fullName>
    </recommendedName>
    <alternativeName>
        <fullName>Mediator complex subunit 22</fullName>
    </alternativeName>
</protein>
<comment type="function">
    <text evidence="1">Component of the Mediator complex, a coactivator involved in the regulated transcription of nearly all RNA polymerase II-dependent genes. Mediator functions as a bridge to convey information from gene-specific regulatory proteins to the basal RNA polymerase II transcription machinery. Mediator is recruited to promoters by direct interactions with regulatory proteins and serves as a scaffold for the assembly of a functional preinitiation complex with RNA polymerase II and the general transcription factors (By similarity).</text>
</comment>
<comment type="subunit">
    <text evidence="1">Component of the Mediator complex.</text>
</comment>
<comment type="subcellular location">
    <subcellularLocation>
        <location evidence="1">Nucleus</location>
    </subcellularLocation>
</comment>
<comment type="similarity">
    <text evidence="2">Belongs to the Mediator complex subunit 22 family.</text>
</comment>
<proteinExistence type="inferred from homology"/>